<protein>
    <recommendedName>
        <fullName>Centrosomal protein of 104 kDa</fullName>
        <shortName>Cep104</shortName>
    </recommendedName>
</protein>
<accession>Q80V31</accession>
<accession>B1AX97</accession>
<accession>Q6ZQ95</accession>
<comment type="function">
    <text evidence="1">Required for ciliogenesis and for structural integrity at the ciliary tip.</text>
</comment>
<comment type="subunit">
    <text evidence="1">Interacts with CCP110 and CEP97. Interacts with ARMC9, TOGARAM1, CCDC66 and CSPP1.</text>
</comment>
<comment type="interaction">
    <interactant intactId="EBI-11073001">
        <id>Q80V31</id>
    </interactant>
    <interactant intactId="EBI-744603">
        <id>Q15637</id>
        <label>SF1</label>
    </interactant>
    <organismsDiffer>true</organismsDiffer>
    <experiments>3</experiments>
</comment>
<comment type="subcellular location">
    <subcellularLocation>
        <location evidence="1">Cell projection</location>
        <location evidence="1">Cilium</location>
    </subcellularLocation>
    <subcellularLocation>
        <location evidence="1">Cytoplasm</location>
        <location evidence="1">Cytoskeleton</location>
        <location evidence="1">Microtubule organizing center</location>
        <location evidence="1">Centrosome</location>
        <location evidence="1">Centriole</location>
    </subcellularLocation>
    <subcellularLocation>
        <location evidence="1">Cytoplasm</location>
        <location evidence="1">Cytoskeleton</location>
        <location evidence="1">Microtubule organizing center</location>
        <location evidence="1">Centrosome</location>
    </subcellularLocation>
    <subcellularLocation>
        <location evidence="1">Cytoplasm</location>
        <location evidence="1">Cytoskeleton</location>
        <location evidence="1">Spindle pole</location>
    </subcellularLocation>
    <text evidence="1">In interphase non-ciliated cells, localizes to the distal ends of both the mother and daughter centrioles. In ciliated cells, present at the distal end of the daughter centriole, but not on the mother centriole, and at the tip of primary cilium. Localization at the ciliary tip is also observed in motile cilia. Throughout S phase, associated with both mother and daughter centrioles in each centrosome. During metaphase and telophase, present at both spindle poles.</text>
</comment>
<dbReference type="EMBL" id="AL806525">
    <property type="status" value="NOT_ANNOTATED_CDS"/>
    <property type="molecule type" value="Genomic_DNA"/>
</dbReference>
<dbReference type="EMBL" id="BC046331">
    <property type="protein sequence ID" value="AAH46331.1"/>
    <property type="molecule type" value="mRNA"/>
</dbReference>
<dbReference type="EMBL" id="AK129163">
    <property type="protein sequence ID" value="BAC97973.1"/>
    <property type="molecule type" value="mRNA"/>
</dbReference>
<dbReference type="CCDS" id="CCDS19005.1"/>
<dbReference type="RefSeq" id="NP_808341.1">
    <property type="nucleotide sequence ID" value="NM_177673.3"/>
</dbReference>
<dbReference type="SMR" id="Q80V31"/>
<dbReference type="BioGRID" id="231061">
    <property type="interactions" value="9"/>
</dbReference>
<dbReference type="FunCoup" id="Q80V31">
    <property type="interactions" value="1239"/>
</dbReference>
<dbReference type="IntAct" id="Q80V31">
    <property type="interactions" value="7"/>
</dbReference>
<dbReference type="STRING" id="10090.ENSMUSP00000040762"/>
<dbReference type="iPTMnet" id="Q80V31"/>
<dbReference type="PhosphoSitePlus" id="Q80V31"/>
<dbReference type="PaxDb" id="10090-ENSMUSP00000040762"/>
<dbReference type="ProteomicsDB" id="281155"/>
<dbReference type="Antibodypedia" id="26970">
    <property type="antibodies" value="93 antibodies from 16 providers"/>
</dbReference>
<dbReference type="DNASU" id="230967"/>
<dbReference type="Ensembl" id="ENSMUST00000047497.15">
    <property type="protein sequence ID" value="ENSMUSP00000040762.9"/>
    <property type="gene ID" value="ENSMUSG00000039523.17"/>
</dbReference>
<dbReference type="GeneID" id="230967"/>
<dbReference type="KEGG" id="mmu:230967"/>
<dbReference type="UCSC" id="uc008wax.1">
    <property type="organism name" value="mouse"/>
</dbReference>
<dbReference type="AGR" id="MGI:2687282"/>
<dbReference type="CTD" id="9731"/>
<dbReference type="MGI" id="MGI:2687282">
    <property type="gene designation" value="Cep104"/>
</dbReference>
<dbReference type="VEuPathDB" id="HostDB:ENSMUSG00000039523"/>
<dbReference type="eggNOG" id="KOG4825">
    <property type="taxonomic scope" value="Eukaryota"/>
</dbReference>
<dbReference type="GeneTree" id="ENSGT00390000013405"/>
<dbReference type="HOGENOM" id="CLU_003200_0_0_1"/>
<dbReference type="InParanoid" id="Q80V31"/>
<dbReference type="OMA" id="VQGNDYN"/>
<dbReference type="OrthoDB" id="66599at2759"/>
<dbReference type="PhylomeDB" id="Q80V31"/>
<dbReference type="TreeFam" id="TF323766"/>
<dbReference type="BioGRID-ORCS" id="230967">
    <property type="hits" value="2 hits in 77 CRISPR screens"/>
</dbReference>
<dbReference type="ChiTaRS" id="Cep104">
    <property type="organism name" value="mouse"/>
</dbReference>
<dbReference type="PRO" id="PR:Q80V31"/>
<dbReference type="Proteomes" id="UP000000589">
    <property type="component" value="Chromosome 4"/>
</dbReference>
<dbReference type="RNAct" id="Q80V31">
    <property type="molecule type" value="protein"/>
</dbReference>
<dbReference type="Bgee" id="ENSMUSG00000039523">
    <property type="expression patterns" value="Expressed in olfactory epithelium and 235 other cell types or tissues"/>
</dbReference>
<dbReference type="ExpressionAtlas" id="Q80V31">
    <property type="expression patterns" value="baseline and differential"/>
</dbReference>
<dbReference type="GO" id="GO:0005814">
    <property type="term" value="C:centriole"/>
    <property type="evidence" value="ECO:0000250"/>
    <property type="project" value="UniProtKB"/>
</dbReference>
<dbReference type="GO" id="GO:0005813">
    <property type="term" value="C:centrosome"/>
    <property type="evidence" value="ECO:0007669"/>
    <property type="project" value="UniProtKB-SubCell"/>
</dbReference>
<dbReference type="GO" id="GO:0005929">
    <property type="term" value="C:cilium"/>
    <property type="evidence" value="ECO:0007669"/>
    <property type="project" value="UniProtKB-SubCell"/>
</dbReference>
<dbReference type="GO" id="GO:0005737">
    <property type="term" value="C:cytoplasm"/>
    <property type="evidence" value="ECO:0007669"/>
    <property type="project" value="UniProtKB-KW"/>
</dbReference>
<dbReference type="GO" id="GO:0000922">
    <property type="term" value="C:spindle pole"/>
    <property type="evidence" value="ECO:0007669"/>
    <property type="project" value="UniProtKB-SubCell"/>
</dbReference>
<dbReference type="FunFam" id="1.25.10.10:FF:000200">
    <property type="entry name" value="Centrosomal protein of 104 kDa"/>
    <property type="match status" value="1"/>
</dbReference>
<dbReference type="FunFam" id="3.30.40.10:FF:000378">
    <property type="entry name" value="TRAF-type zinc finger domain-containing 1"/>
    <property type="match status" value="1"/>
</dbReference>
<dbReference type="Gene3D" id="1.25.10.10">
    <property type="entry name" value="Leucine-rich Repeat Variant"/>
    <property type="match status" value="1"/>
</dbReference>
<dbReference type="Gene3D" id="3.30.40.10">
    <property type="entry name" value="Zinc/RING finger domain, C3HC4 (zinc finger)"/>
    <property type="match status" value="1"/>
</dbReference>
<dbReference type="InterPro" id="IPR011989">
    <property type="entry name" value="ARM-like"/>
</dbReference>
<dbReference type="InterPro" id="IPR016024">
    <property type="entry name" value="ARM-type_fold"/>
</dbReference>
<dbReference type="InterPro" id="IPR052607">
    <property type="entry name" value="CEP104-like"/>
</dbReference>
<dbReference type="InterPro" id="IPR048739">
    <property type="entry name" value="CEP104_N"/>
</dbReference>
<dbReference type="InterPro" id="IPR048738">
    <property type="entry name" value="CEP104_Znf"/>
</dbReference>
<dbReference type="InterPro" id="IPR008979">
    <property type="entry name" value="Galactose-bd-like_sf"/>
</dbReference>
<dbReference type="InterPro" id="IPR034085">
    <property type="entry name" value="TOG"/>
</dbReference>
<dbReference type="InterPro" id="IPR013083">
    <property type="entry name" value="Znf_RING/FYVE/PHD"/>
</dbReference>
<dbReference type="PANTHER" id="PTHR13371:SF0">
    <property type="entry name" value="CENTROSOMAL PROTEIN OF 104 KDA"/>
    <property type="match status" value="1"/>
</dbReference>
<dbReference type="PANTHER" id="PTHR13371">
    <property type="entry name" value="GLYCINE-, GLUTAMATE-, THIENYLCYCLOHEXYLPIPERIDINE-BINDING PROTEIN"/>
    <property type="match status" value="1"/>
</dbReference>
<dbReference type="Pfam" id="PF21040">
    <property type="entry name" value="CEP104-like_TOG"/>
    <property type="match status" value="1"/>
</dbReference>
<dbReference type="Pfam" id="PF21038">
    <property type="entry name" value="CEP104_N"/>
    <property type="match status" value="1"/>
</dbReference>
<dbReference type="Pfam" id="PF21039">
    <property type="entry name" value="CEP104_ZnF"/>
    <property type="match status" value="1"/>
</dbReference>
<dbReference type="SMART" id="SM01349">
    <property type="entry name" value="TOG"/>
    <property type="match status" value="1"/>
</dbReference>
<dbReference type="SUPFAM" id="SSF48371">
    <property type="entry name" value="ARM repeat"/>
    <property type="match status" value="1"/>
</dbReference>
<dbReference type="SUPFAM" id="SSF49785">
    <property type="entry name" value="Galactose-binding domain-like"/>
    <property type="match status" value="1"/>
</dbReference>
<keyword id="KW-0966">Cell projection</keyword>
<keyword id="KW-0175">Coiled coil</keyword>
<keyword id="KW-0963">Cytoplasm</keyword>
<keyword id="KW-0206">Cytoskeleton</keyword>
<keyword id="KW-1185">Reference proteome</keyword>
<keyword id="KW-0677">Repeat</keyword>
<name>CE104_MOUSE</name>
<reference key="1">
    <citation type="journal article" date="2009" name="PLoS Biol.">
        <title>Lineage-specific biology revealed by a finished genome assembly of the mouse.</title>
        <authorList>
            <person name="Church D.M."/>
            <person name="Goodstadt L."/>
            <person name="Hillier L.W."/>
            <person name="Zody M.C."/>
            <person name="Goldstein S."/>
            <person name="She X."/>
            <person name="Bult C.J."/>
            <person name="Agarwala R."/>
            <person name="Cherry J.L."/>
            <person name="DiCuccio M."/>
            <person name="Hlavina W."/>
            <person name="Kapustin Y."/>
            <person name="Meric P."/>
            <person name="Maglott D."/>
            <person name="Birtle Z."/>
            <person name="Marques A.C."/>
            <person name="Graves T."/>
            <person name="Zhou S."/>
            <person name="Teague B."/>
            <person name="Potamousis K."/>
            <person name="Churas C."/>
            <person name="Place M."/>
            <person name="Herschleb J."/>
            <person name="Runnheim R."/>
            <person name="Forrest D."/>
            <person name="Amos-Landgraf J."/>
            <person name="Schwartz D.C."/>
            <person name="Cheng Z."/>
            <person name="Lindblad-Toh K."/>
            <person name="Eichler E.E."/>
            <person name="Ponting C.P."/>
        </authorList>
    </citation>
    <scope>NUCLEOTIDE SEQUENCE [LARGE SCALE GENOMIC DNA]</scope>
    <source>
        <strain>C57BL/6J</strain>
    </source>
</reference>
<reference key="2">
    <citation type="journal article" date="2004" name="Genome Res.">
        <title>The status, quality, and expansion of the NIH full-length cDNA project: the Mammalian Gene Collection (MGC).</title>
        <authorList>
            <consortium name="The MGC Project Team"/>
        </authorList>
    </citation>
    <scope>NUCLEOTIDE SEQUENCE [LARGE SCALE MRNA]</scope>
    <source>
        <strain>FVB/N-3</strain>
        <tissue>Mammary tumor</tissue>
    </source>
</reference>
<reference key="3">
    <citation type="journal article" date="2003" name="DNA Res.">
        <title>Prediction of the coding sequences of mouse homologues of KIAA gene: III. The complete nucleotide sequences of 500 mouse KIAA-homologous cDNAs identified by screening of terminal sequences of cDNA clones randomly sampled from size-fractionated libraries.</title>
        <authorList>
            <person name="Okazaki N."/>
            <person name="Kikuno R."/>
            <person name="Ohara R."/>
            <person name="Inamoto S."/>
            <person name="Koseki H."/>
            <person name="Hiraoka S."/>
            <person name="Saga Y."/>
            <person name="Nagase T."/>
            <person name="Ohara O."/>
            <person name="Koga H."/>
        </authorList>
    </citation>
    <scope>NUCLEOTIDE SEQUENCE [LARGE SCALE MRNA] OF 21-926</scope>
    <source>
        <tissue>Brain</tissue>
    </source>
</reference>
<feature type="chain" id="PRO_0000050764" description="Centrosomal protein of 104 kDa">
    <location>
        <begin position="1"/>
        <end position="926"/>
    </location>
</feature>
<feature type="repeat" description="HEAT 1">
    <location>
        <begin position="522"/>
        <end position="558"/>
    </location>
</feature>
<feature type="repeat" description="HEAT 2">
    <location>
        <begin position="603"/>
        <end position="639"/>
    </location>
</feature>
<feature type="region of interest" description="Disordered" evidence="3">
    <location>
        <begin position="345"/>
        <end position="419"/>
    </location>
</feature>
<feature type="region of interest" description="Disordered" evidence="3">
    <location>
        <begin position="690"/>
        <end position="741"/>
    </location>
</feature>
<feature type="region of interest" description="Disordered" evidence="3">
    <location>
        <begin position="885"/>
        <end position="926"/>
    </location>
</feature>
<feature type="coiled-coil region" evidence="2">
    <location>
        <begin position="212"/>
        <end position="279"/>
    </location>
</feature>
<feature type="coiled-coil region" evidence="2">
    <location>
        <begin position="678"/>
        <end position="730"/>
    </location>
</feature>
<feature type="compositionally biased region" description="Basic and acidic residues" evidence="3">
    <location>
        <begin position="398"/>
        <end position="409"/>
    </location>
</feature>
<feature type="compositionally biased region" description="Basic and acidic residues" evidence="3">
    <location>
        <begin position="690"/>
        <end position="701"/>
    </location>
</feature>
<feature type="compositionally biased region" description="Basic and acidic residues" evidence="3">
    <location>
        <begin position="718"/>
        <end position="729"/>
    </location>
</feature>
<feature type="compositionally biased region" description="Low complexity" evidence="3">
    <location>
        <begin position="889"/>
        <end position="903"/>
    </location>
</feature>
<feature type="compositionally biased region" description="Polar residues" evidence="3">
    <location>
        <begin position="916"/>
        <end position="926"/>
    </location>
</feature>
<sequence>MPHKIGFVVVSSSGHEDGFSARELMIHAPTVSGWRSPKFCQFPQEIVLQMVERCRVRKLQLLAHQYMISSKVEFYISESLPEYLVPYQAERFRRLGYVSLCDNEKTGCKARELKSVYVDAVGQFLKLIFHQNHANKYNIYNQVALVAINIIGDPADLGDESNITSREKLIDHYLGHSPHNPEDPALDGTFSGRSDYISPLDDLAFDMYQDPEVAQIIRRLDERKREAVKKERYDHAKKLKQAIADLQKVGERLGRYEVEKRCAVEKEDYDLAKEKKQQMARYRAQVYEQLELHGLLQGEPEMQRPFALPLQPLASPSSPQHWKAVSSLPRTEKLVAEDSFAGPVLQEKPSASSPQHSAVDPSPPAAGHAPRSHTEVLPYDERPLPVTRKQLGEASAEAEVKEADSDVRRRGVAGEPEPLTEKALREASAAIDTLGEALVAGAYSKMWSCREDALLALYKKLMEMPVGTQKEDLKNMLRASVFLIRRAIKDIVASVFQASLKLLKMIITQYIPKHKLGKLDTTHCVERAFPLLLARAGDSSARLRVMALNFIQEMALFKEVKSLQLIPSYLVQPLKANASVHLAMSQVDLLARLLRDLGTESSGFTVDNVMKFAVSALEHRVYEVRETAVRIILDMYRQHPALTLEHLPPDDSATRRNLLYKAIFEGFAKIDGSVLPTEAEVRAQKRVATKEAEKQKKEEMKALQGQSGELRETQAGVQEKESEAVKLRNQDPQGRKAVLPDTPEIPANHFLDNLCIFCGERNESFTEEGLDLHYWKHCLMLTRCDHCRQVVEISSLTEHLLTECDRRDGFGKCPRCSEAIPKEELPGHIKTKECSPAKPEKVANHCPLCHENFAPGEEAWKVHLMGPAGCTMNLRKTHVLYKATAPQQGKGPAAAKSSTSAPKVGSKIPTPKGGLSKSSSRTYMRR</sequence>
<organism>
    <name type="scientific">Mus musculus</name>
    <name type="common">Mouse</name>
    <dbReference type="NCBI Taxonomy" id="10090"/>
    <lineage>
        <taxon>Eukaryota</taxon>
        <taxon>Metazoa</taxon>
        <taxon>Chordata</taxon>
        <taxon>Craniata</taxon>
        <taxon>Vertebrata</taxon>
        <taxon>Euteleostomi</taxon>
        <taxon>Mammalia</taxon>
        <taxon>Eutheria</taxon>
        <taxon>Euarchontoglires</taxon>
        <taxon>Glires</taxon>
        <taxon>Rodentia</taxon>
        <taxon>Myomorpha</taxon>
        <taxon>Muroidea</taxon>
        <taxon>Muridae</taxon>
        <taxon>Murinae</taxon>
        <taxon>Mus</taxon>
        <taxon>Mus</taxon>
    </lineage>
</organism>
<evidence type="ECO:0000250" key="1">
    <source>
        <dbReference type="UniProtKB" id="O60308"/>
    </source>
</evidence>
<evidence type="ECO:0000255" key="2"/>
<evidence type="ECO:0000256" key="3">
    <source>
        <dbReference type="SAM" id="MobiDB-lite"/>
    </source>
</evidence>
<proteinExistence type="evidence at protein level"/>
<gene>
    <name type="primary">Cep104</name>
    <name type="synonym">Kiaa0562</name>
</gene>